<protein>
    <recommendedName>
        <fullName>OX-2 membrane glycoprotein</fullName>
    </recommendedName>
    <cdAntigenName>CD200</cdAntigenName>
</protein>
<gene>
    <name type="primary">CD200</name>
</gene>
<name>OX2G_PONAB</name>
<organism>
    <name type="scientific">Pongo abelii</name>
    <name type="common">Sumatran orangutan</name>
    <name type="synonym">Pongo pygmaeus abelii</name>
    <dbReference type="NCBI Taxonomy" id="9601"/>
    <lineage>
        <taxon>Eukaryota</taxon>
        <taxon>Metazoa</taxon>
        <taxon>Chordata</taxon>
        <taxon>Craniata</taxon>
        <taxon>Vertebrata</taxon>
        <taxon>Euteleostomi</taxon>
        <taxon>Mammalia</taxon>
        <taxon>Eutheria</taxon>
        <taxon>Euarchontoglires</taxon>
        <taxon>Primates</taxon>
        <taxon>Haplorrhini</taxon>
        <taxon>Catarrhini</taxon>
        <taxon>Hominidae</taxon>
        <taxon>Pongo</taxon>
    </lineage>
</organism>
<feature type="signal peptide" evidence="2">
    <location>
        <begin position="1"/>
        <end position="30"/>
    </location>
</feature>
<feature type="chain" id="PRO_0000250714" description="OX-2 membrane glycoprotein">
    <location>
        <begin position="31"/>
        <end position="269"/>
    </location>
</feature>
<feature type="topological domain" description="Extracellular" evidence="2">
    <location>
        <begin position="31"/>
        <end position="236"/>
    </location>
</feature>
<feature type="transmembrane region" description="Helical" evidence="2">
    <location>
        <begin position="237"/>
        <end position="257"/>
    </location>
</feature>
<feature type="topological domain" description="Cytoplasmic" evidence="2">
    <location>
        <begin position="258"/>
        <end position="269"/>
    </location>
</feature>
<feature type="domain" description="Ig-like V-type">
    <location>
        <begin position="31"/>
        <end position="141"/>
    </location>
</feature>
<feature type="domain" description="Ig-like C2-type">
    <location>
        <begin position="142"/>
        <end position="232"/>
    </location>
</feature>
<feature type="glycosylation site" description="N-linked (GlcNAc...) asparagine" evidence="2">
    <location>
        <position position="103"/>
    </location>
</feature>
<feature type="glycosylation site" description="N-linked (GlcNAc...) asparagine" evidence="2">
    <location>
        <position position="110"/>
    </location>
</feature>
<feature type="glycosylation site" description="N-linked (GlcNAc...) asparagine" evidence="2">
    <location>
        <position position="157"/>
    </location>
</feature>
<feature type="glycosylation site" description="N-linked (GlcNAc...) asparagine" evidence="2">
    <location>
        <position position="181"/>
    </location>
</feature>
<feature type="glycosylation site" description="N-linked (GlcNAc...) asparagine" evidence="2">
    <location>
        <position position="190"/>
    </location>
</feature>
<feature type="disulfide bond" evidence="3">
    <location>
        <begin position="51"/>
        <end position="121"/>
    </location>
</feature>
<feature type="disulfide bond" evidence="3">
    <location>
        <begin position="118"/>
        <end position="136"/>
    </location>
</feature>
<feature type="disulfide bond" evidence="3">
    <location>
        <begin position="160"/>
        <end position="214"/>
    </location>
</feature>
<accession>Q5RAL8</accession>
<keyword id="KW-1003">Cell membrane</keyword>
<keyword id="KW-1015">Disulfide bond</keyword>
<keyword id="KW-0325">Glycoprotein</keyword>
<keyword id="KW-0393">Immunoglobulin domain</keyword>
<keyword id="KW-0472">Membrane</keyword>
<keyword id="KW-1185">Reference proteome</keyword>
<keyword id="KW-0732">Signal</keyword>
<keyword id="KW-0812">Transmembrane</keyword>
<keyword id="KW-1133">Transmembrane helix</keyword>
<sequence>MERLVIRMPFCHLSTYSLVWVMAAVVLCTAQVQVVTQDEREQLYTPASLKCSLQNAQEALIVTWQKKKAVSPENMVTFSENHGVVIQPAYKDKINIAQLGLQNSTITFWNITLEDEGCYMCLFNTFGFGKISGTACLTVYVQPIVSLHYKFSEDHLNTTCSATARPAPMVFWKVPRSGIENSTVTLSHPNGTTSVTSILHIKDPKNQVGKEAICQVLHLGTVTDFKQTVNKGYWFSVPLLLSIVSLVTLLVLISILLYWKRHRNQDREP</sequence>
<comment type="function">
    <text evidence="1">Costimulates T-cell proliferation. May regulate myeloid cell activity in a variety of tissues (By similarity).</text>
</comment>
<comment type="subunit">
    <text evidence="1">CD200 and CD200R1 interact via their respective N-terminal Ig-like domains.</text>
</comment>
<comment type="subcellular location">
    <subcellularLocation>
        <location evidence="1">Cell membrane</location>
        <topology evidence="1">Single-pass type I membrane protein</topology>
    </subcellularLocation>
</comment>
<reference key="1">
    <citation type="submission" date="2004-11" db="EMBL/GenBank/DDBJ databases">
        <authorList>
            <consortium name="The German cDNA consortium"/>
        </authorList>
    </citation>
    <scope>NUCLEOTIDE SEQUENCE [LARGE SCALE MRNA]</scope>
    <source>
        <tissue>Brain cortex</tissue>
    </source>
</reference>
<proteinExistence type="evidence at transcript level"/>
<evidence type="ECO:0000250" key="1"/>
<evidence type="ECO:0000255" key="2"/>
<evidence type="ECO:0000255" key="3">
    <source>
        <dbReference type="PROSITE-ProRule" id="PRU00114"/>
    </source>
</evidence>
<dbReference type="EMBL" id="CR858997">
    <property type="protein sequence ID" value="CAH91192.1"/>
    <property type="molecule type" value="mRNA"/>
</dbReference>
<dbReference type="RefSeq" id="NP_001125699.1">
    <property type="nucleotide sequence ID" value="NM_001132227.1"/>
</dbReference>
<dbReference type="SMR" id="Q5RAL8"/>
<dbReference type="FunCoup" id="Q5RAL8">
    <property type="interactions" value="50"/>
</dbReference>
<dbReference type="STRING" id="9601.ENSPPYP00000015150"/>
<dbReference type="GlyCosmos" id="Q5RAL8">
    <property type="glycosylation" value="5 sites, No reported glycans"/>
</dbReference>
<dbReference type="GeneID" id="100172623"/>
<dbReference type="KEGG" id="pon:100172623"/>
<dbReference type="CTD" id="4345"/>
<dbReference type="eggNOG" id="ENOG502S5DU">
    <property type="taxonomic scope" value="Eukaryota"/>
</dbReference>
<dbReference type="InParanoid" id="Q5RAL8"/>
<dbReference type="OrthoDB" id="8749387at2759"/>
<dbReference type="Proteomes" id="UP000001595">
    <property type="component" value="Unplaced"/>
</dbReference>
<dbReference type="GO" id="GO:0030424">
    <property type="term" value="C:axon"/>
    <property type="evidence" value="ECO:0007669"/>
    <property type="project" value="TreeGrafter"/>
</dbReference>
<dbReference type="GO" id="GO:0009986">
    <property type="term" value="C:cell surface"/>
    <property type="evidence" value="ECO:0007669"/>
    <property type="project" value="TreeGrafter"/>
</dbReference>
<dbReference type="GO" id="GO:0043025">
    <property type="term" value="C:neuronal cell body"/>
    <property type="evidence" value="ECO:0007669"/>
    <property type="project" value="TreeGrafter"/>
</dbReference>
<dbReference type="GO" id="GO:0005886">
    <property type="term" value="C:plasma membrane"/>
    <property type="evidence" value="ECO:0007669"/>
    <property type="project" value="UniProtKB-SubCell"/>
</dbReference>
<dbReference type="GO" id="GO:0098632">
    <property type="term" value="F:cell-cell adhesion mediator activity"/>
    <property type="evidence" value="ECO:0007669"/>
    <property type="project" value="InterPro"/>
</dbReference>
<dbReference type="GO" id="GO:0034113">
    <property type="term" value="P:heterotypic cell-cell adhesion"/>
    <property type="evidence" value="ECO:0007669"/>
    <property type="project" value="TreeGrafter"/>
</dbReference>
<dbReference type="GO" id="GO:0043031">
    <property type="term" value="P:negative regulation of macrophage activation"/>
    <property type="evidence" value="ECO:0007669"/>
    <property type="project" value="InterPro"/>
</dbReference>
<dbReference type="GO" id="GO:0150079">
    <property type="term" value="P:negative regulation of neuroinflammatory response"/>
    <property type="evidence" value="ECO:0007669"/>
    <property type="project" value="TreeGrafter"/>
</dbReference>
<dbReference type="GO" id="GO:0050776">
    <property type="term" value="P:regulation of immune response"/>
    <property type="evidence" value="ECO:0007669"/>
    <property type="project" value="InterPro"/>
</dbReference>
<dbReference type="CDD" id="cd05846">
    <property type="entry name" value="IgV_1_MRC-OX-2_like"/>
    <property type="match status" value="1"/>
</dbReference>
<dbReference type="FunFam" id="2.60.40.10:FF:001062">
    <property type="entry name" value="OX-2 membrane glycoprotein"/>
    <property type="match status" value="1"/>
</dbReference>
<dbReference type="FunFam" id="2.60.40.10:FF:001279">
    <property type="entry name" value="OX-2 membrane glycoprotein"/>
    <property type="match status" value="1"/>
</dbReference>
<dbReference type="Gene3D" id="2.60.40.10">
    <property type="entry name" value="Immunoglobulins"/>
    <property type="match status" value="2"/>
</dbReference>
<dbReference type="InterPro" id="IPR033321">
    <property type="entry name" value="CD200_Ig_V_dom"/>
</dbReference>
<dbReference type="InterPro" id="IPR007110">
    <property type="entry name" value="Ig-like_dom"/>
</dbReference>
<dbReference type="InterPro" id="IPR036179">
    <property type="entry name" value="Ig-like_dom_sf"/>
</dbReference>
<dbReference type="InterPro" id="IPR013783">
    <property type="entry name" value="Ig-like_fold"/>
</dbReference>
<dbReference type="InterPro" id="IPR003599">
    <property type="entry name" value="Ig_sub"/>
</dbReference>
<dbReference type="InterPro" id="IPR013106">
    <property type="entry name" value="Ig_V-set"/>
</dbReference>
<dbReference type="InterPro" id="IPR013151">
    <property type="entry name" value="Immunoglobulin_dom"/>
</dbReference>
<dbReference type="InterPro" id="IPR047164">
    <property type="entry name" value="OX2G-like"/>
</dbReference>
<dbReference type="PANTHER" id="PTHR46841">
    <property type="entry name" value="OX-2 MEMBRANE GLYCOPROTEIN"/>
    <property type="match status" value="1"/>
</dbReference>
<dbReference type="PANTHER" id="PTHR46841:SF3">
    <property type="entry name" value="OX-2 MEMBRANE GLYCOPROTEIN"/>
    <property type="match status" value="1"/>
</dbReference>
<dbReference type="Pfam" id="PF00047">
    <property type="entry name" value="ig"/>
    <property type="match status" value="2"/>
</dbReference>
<dbReference type="SMART" id="SM00409">
    <property type="entry name" value="IG"/>
    <property type="match status" value="1"/>
</dbReference>
<dbReference type="SMART" id="SM00406">
    <property type="entry name" value="IGv"/>
    <property type="match status" value="1"/>
</dbReference>
<dbReference type="SUPFAM" id="SSF48726">
    <property type="entry name" value="Immunoglobulin"/>
    <property type="match status" value="2"/>
</dbReference>
<dbReference type="PROSITE" id="PS50835">
    <property type="entry name" value="IG_LIKE"/>
    <property type="match status" value="1"/>
</dbReference>